<evidence type="ECO:0000255" key="1">
    <source>
        <dbReference type="HAMAP-Rule" id="MF_01345"/>
    </source>
</evidence>
<evidence type="ECO:0000305" key="2"/>
<dbReference type="EMBL" id="AE010299">
    <property type="protein sequence ID" value="AAM04506.1"/>
    <property type="molecule type" value="Genomic_DNA"/>
</dbReference>
<dbReference type="RefSeq" id="WP_011021110.1">
    <property type="nucleotide sequence ID" value="NC_003552.1"/>
</dbReference>
<dbReference type="SMR" id="Q8TRT8"/>
<dbReference type="FunCoup" id="Q8TRT8">
    <property type="interactions" value="148"/>
</dbReference>
<dbReference type="STRING" id="188937.MA_1081"/>
<dbReference type="EnsemblBacteria" id="AAM04506">
    <property type="protein sequence ID" value="AAM04506"/>
    <property type="gene ID" value="MA_1081"/>
</dbReference>
<dbReference type="GeneID" id="24832548"/>
<dbReference type="KEGG" id="mac:MA_1081"/>
<dbReference type="HOGENOM" id="CLU_073626_0_3_2"/>
<dbReference type="InParanoid" id="Q8TRT8"/>
<dbReference type="OrthoDB" id="10698at2157"/>
<dbReference type="PhylomeDB" id="Q8TRT8"/>
<dbReference type="Proteomes" id="UP000002487">
    <property type="component" value="Chromosome"/>
</dbReference>
<dbReference type="GO" id="GO:0022627">
    <property type="term" value="C:cytosolic small ribosomal subunit"/>
    <property type="evidence" value="ECO:0000318"/>
    <property type="project" value="GO_Central"/>
</dbReference>
<dbReference type="GO" id="GO:0019843">
    <property type="term" value="F:rRNA binding"/>
    <property type="evidence" value="ECO:0007669"/>
    <property type="project" value="UniProtKB-UniRule"/>
</dbReference>
<dbReference type="GO" id="GO:0003735">
    <property type="term" value="F:structural constituent of ribosome"/>
    <property type="evidence" value="ECO:0000318"/>
    <property type="project" value="GO_Central"/>
</dbReference>
<dbReference type="GO" id="GO:0006412">
    <property type="term" value="P:translation"/>
    <property type="evidence" value="ECO:0007669"/>
    <property type="project" value="UniProtKB-UniRule"/>
</dbReference>
<dbReference type="CDD" id="cd00364">
    <property type="entry name" value="Ribosomal_uS17"/>
    <property type="match status" value="1"/>
</dbReference>
<dbReference type="FunFam" id="2.40.50.1000:FF:000005">
    <property type="entry name" value="30S ribosomal protein S17"/>
    <property type="match status" value="1"/>
</dbReference>
<dbReference type="Gene3D" id="2.40.50.1000">
    <property type="match status" value="1"/>
</dbReference>
<dbReference type="HAMAP" id="MF_01345_A">
    <property type="entry name" value="Ribosomal_uS17_A"/>
    <property type="match status" value="1"/>
</dbReference>
<dbReference type="InterPro" id="IPR012340">
    <property type="entry name" value="NA-bd_OB-fold"/>
</dbReference>
<dbReference type="InterPro" id="IPR000266">
    <property type="entry name" value="Ribosomal_uS17"/>
</dbReference>
<dbReference type="InterPro" id="IPR028333">
    <property type="entry name" value="Ribosomal_uS17_arc/euk"/>
</dbReference>
<dbReference type="InterPro" id="IPR019978">
    <property type="entry name" value="Ribosomal_uS17_archaeal"/>
</dbReference>
<dbReference type="InterPro" id="IPR019979">
    <property type="entry name" value="Ribosomal_uS17_CS"/>
</dbReference>
<dbReference type="NCBIfam" id="NF006345">
    <property type="entry name" value="PRK08572.1"/>
    <property type="match status" value="1"/>
</dbReference>
<dbReference type="NCBIfam" id="TIGR03630">
    <property type="entry name" value="uS17_arch"/>
    <property type="match status" value="1"/>
</dbReference>
<dbReference type="PANTHER" id="PTHR10744">
    <property type="entry name" value="40S RIBOSOMAL PROTEIN S11 FAMILY MEMBER"/>
    <property type="match status" value="1"/>
</dbReference>
<dbReference type="PANTHER" id="PTHR10744:SF9">
    <property type="entry name" value="40S RIBOSOMAL PROTEIN S11-RELATED"/>
    <property type="match status" value="1"/>
</dbReference>
<dbReference type="Pfam" id="PF00366">
    <property type="entry name" value="Ribosomal_S17"/>
    <property type="match status" value="1"/>
</dbReference>
<dbReference type="PRINTS" id="PR00973">
    <property type="entry name" value="RIBOSOMALS17"/>
</dbReference>
<dbReference type="SUPFAM" id="SSF50249">
    <property type="entry name" value="Nucleic acid-binding proteins"/>
    <property type="match status" value="1"/>
</dbReference>
<dbReference type="PROSITE" id="PS00056">
    <property type="entry name" value="RIBOSOMAL_S17"/>
    <property type="match status" value="1"/>
</dbReference>
<proteinExistence type="inferred from homology"/>
<organism>
    <name type="scientific">Methanosarcina acetivorans (strain ATCC 35395 / DSM 2834 / JCM 12185 / C2A)</name>
    <dbReference type="NCBI Taxonomy" id="188937"/>
    <lineage>
        <taxon>Archaea</taxon>
        <taxon>Methanobacteriati</taxon>
        <taxon>Methanobacteriota</taxon>
        <taxon>Stenosarchaea group</taxon>
        <taxon>Methanomicrobia</taxon>
        <taxon>Methanosarcinales</taxon>
        <taxon>Methanosarcinaceae</taxon>
        <taxon>Methanosarcina</taxon>
    </lineage>
</organism>
<gene>
    <name evidence="1" type="primary">rps17-1</name>
    <name type="ordered locus">MA_1081</name>
</gene>
<accession>Q8TRT8</accession>
<reference key="1">
    <citation type="journal article" date="2002" name="Genome Res.">
        <title>The genome of Methanosarcina acetivorans reveals extensive metabolic and physiological diversity.</title>
        <authorList>
            <person name="Galagan J.E."/>
            <person name="Nusbaum C."/>
            <person name="Roy A."/>
            <person name="Endrizzi M.G."/>
            <person name="Macdonald P."/>
            <person name="FitzHugh W."/>
            <person name="Calvo S."/>
            <person name="Engels R."/>
            <person name="Smirnov S."/>
            <person name="Atnoor D."/>
            <person name="Brown A."/>
            <person name="Allen N."/>
            <person name="Naylor J."/>
            <person name="Stange-Thomann N."/>
            <person name="DeArellano K."/>
            <person name="Johnson R."/>
            <person name="Linton L."/>
            <person name="McEwan P."/>
            <person name="McKernan K."/>
            <person name="Talamas J."/>
            <person name="Tirrell A."/>
            <person name="Ye W."/>
            <person name="Zimmer A."/>
            <person name="Barber R.D."/>
            <person name="Cann I."/>
            <person name="Graham D.E."/>
            <person name="Grahame D.A."/>
            <person name="Guss A.M."/>
            <person name="Hedderich R."/>
            <person name="Ingram-Smith C."/>
            <person name="Kuettner H.C."/>
            <person name="Krzycki J.A."/>
            <person name="Leigh J.A."/>
            <person name="Li W."/>
            <person name="Liu J."/>
            <person name="Mukhopadhyay B."/>
            <person name="Reeve J.N."/>
            <person name="Smith K."/>
            <person name="Springer T.A."/>
            <person name="Umayam L.A."/>
            <person name="White O."/>
            <person name="White R.H."/>
            <person name="de Macario E.C."/>
            <person name="Ferry J.G."/>
            <person name="Jarrell K.F."/>
            <person name="Jing H."/>
            <person name="Macario A.J.L."/>
            <person name="Paulsen I.T."/>
            <person name="Pritchett M."/>
            <person name="Sowers K.R."/>
            <person name="Swanson R.V."/>
            <person name="Zinder S.H."/>
            <person name="Lander E."/>
            <person name="Metcalf W.W."/>
            <person name="Birren B."/>
        </authorList>
    </citation>
    <scope>NUCLEOTIDE SEQUENCE [LARGE SCALE GENOMIC DNA]</scope>
    <source>
        <strain>ATCC 35395 / DSM 2834 / JCM 12185 / C2A</strain>
    </source>
</reference>
<name>RS17_METAC</name>
<protein>
    <recommendedName>
        <fullName evidence="1">Small ribosomal subunit protein uS17A</fullName>
    </recommendedName>
    <alternativeName>
        <fullName evidence="2">30S ribosomal protein S17 1</fullName>
    </alternativeName>
</protein>
<feature type="chain" id="PRO_0000232609" description="Small ribosomal subunit protein uS17A">
    <location>
        <begin position="1"/>
        <end position="109"/>
    </location>
</feature>
<keyword id="KW-1185">Reference proteome</keyword>
<keyword id="KW-0687">Ribonucleoprotein</keyword>
<keyword id="KW-0689">Ribosomal protein</keyword>
<keyword id="KW-0694">RNA-binding</keyword>
<keyword id="KW-0699">rRNA-binding</keyword>
<sequence length="109" mass="12164">MARDIGLNIPAPSEECDDAYCPFHGTLPVRGQILVGTVVSSKMDNTVVIERQYMKMVSKYQRYEKRRSKIHAHNPACISAKVGDIVTIAECRPISKTKSYVVVKAEVPK</sequence>
<comment type="function">
    <text evidence="1">One of the primary rRNA binding proteins, it binds specifically to the 5'-end of 16S ribosomal RNA.</text>
</comment>
<comment type="subunit">
    <text evidence="1">Part of the 30S ribosomal subunit.</text>
</comment>
<comment type="similarity">
    <text evidence="1">Belongs to the universal ribosomal protein uS17 family.</text>
</comment>